<protein>
    <recommendedName>
        <fullName evidence="1">RNA pyrophosphohydrolase</fullName>
        <ecNumber evidence="1">3.6.1.-</ecNumber>
    </recommendedName>
    <alternativeName>
        <fullName evidence="1">(Di)nucleoside polyphosphate hydrolase</fullName>
    </alternativeName>
</protein>
<reference key="1">
    <citation type="submission" date="2006-08" db="EMBL/GenBank/DDBJ databases">
        <title>Complete sequence of chromosome 1 of Burkholderia cepacia AMMD.</title>
        <authorList>
            <person name="Copeland A."/>
            <person name="Lucas S."/>
            <person name="Lapidus A."/>
            <person name="Barry K."/>
            <person name="Detter J.C."/>
            <person name="Glavina del Rio T."/>
            <person name="Hammon N."/>
            <person name="Israni S."/>
            <person name="Pitluck S."/>
            <person name="Bruce D."/>
            <person name="Chain P."/>
            <person name="Malfatti S."/>
            <person name="Shin M."/>
            <person name="Vergez L."/>
            <person name="Schmutz J."/>
            <person name="Larimer F."/>
            <person name="Land M."/>
            <person name="Hauser L."/>
            <person name="Kyrpides N."/>
            <person name="Kim E."/>
            <person name="Parke J."/>
            <person name="Coenye T."/>
            <person name="Konstantinidis K."/>
            <person name="Ramette A."/>
            <person name="Tiedje J."/>
            <person name="Richardson P."/>
        </authorList>
    </citation>
    <scope>NUCLEOTIDE SEQUENCE [LARGE SCALE GENOMIC DNA]</scope>
    <source>
        <strain>ATCC BAA-244 / DSM 16087 / CCUG 44356 / LMG 19182 / AMMD</strain>
    </source>
</reference>
<proteinExistence type="inferred from homology"/>
<evidence type="ECO:0000255" key="1">
    <source>
        <dbReference type="HAMAP-Rule" id="MF_00298"/>
    </source>
</evidence>
<dbReference type="EC" id="3.6.1.-" evidence="1"/>
<dbReference type="EMBL" id="CP000440">
    <property type="protein sequence ID" value="ABI86048.1"/>
    <property type="molecule type" value="Genomic_DNA"/>
</dbReference>
<dbReference type="RefSeq" id="WP_011655908.1">
    <property type="nucleotide sequence ID" value="NZ_CP009798.1"/>
</dbReference>
<dbReference type="SMR" id="Q0BIH5"/>
<dbReference type="KEGG" id="bam:Bamb_0489"/>
<dbReference type="PATRIC" id="fig|339670.21.peg.1117"/>
<dbReference type="eggNOG" id="COG0494">
    <property type="taxonomic scope" value="Bacteria"/>
</dbReference>
<dbReference type="Proteomes" id="UP000000662">
    <property type="component" value="Chromosome 1"/>
</dbReference>
<dbReference type="GO" id="GO:0016462">
    <property type="term" value="F:pyrophosphatase activity"/>
    <property type="evidence" value="ECO:0007669"/>
    <property type="project" value="UniProtKB-ARBA"/>
</dbReference>
<dbReference type="CDD" id="cd03671">
    <property type="entry name" value="NUDIX_Ap4A_hydrolase_plant_like"/>
    <property type="match status" value="1"/>
</dbReference>
<dbReference type="Gene3D" id="3.90.79.10">
    <property type="entry name" value="Nucleoside Triphosphate Pyrophosphohydrolase"/>
    <property type="match status" value="1"/>
</dbReference>
<dbReference type="HAMAP" id="MF_00298">
    <property type="entry name" value="Nudix_RppH"/>
    <property type="match status" value="1"/>
</dbReference>
<dbReference type="InterPro" id="IPR020476">
    <property type="entry name" value="Nudix_hydrolase"/>
</dbReference>
<dbReference type="InterPro" id="IPR015797">
    <property type="entry name" value="NUDIX_hydrolase-like_dom_sf"/>
</dbReference>
<dbReference type="InterPro" id="IPR020084">
    <property type="entry name" value="NUDIX_hydrolase_CS"/>
</dbReference>
<dbReference type="InterPro" id="IPR000086">
    <property type="entry name" value="NUDIX_hydrolase_dom"/>
</dbReference>
<dbReference type="InterPro" id="IPR022927">
    <property type="entry name" value="RppH"/>
</dbReference>
<dbReference type="NCBIfam" id="NF001935">
    <property type="entry name" value="PRK00714.1-2"/>
    <property type="match status" value="1"/>
</dbReference>
<dbReference type="NCBIfam" id="NF001937">
    <property type="entry name" value="PRK00714.1-4"/>
    <property type="match status" value="1"/>
</dbReference>
<dbReference type="NCBIfam" id="NF001938">
    <property type="entry name" value="PRK00714.1-5"/>
    <property type="match status" value="1"/>
</dbReference>
<dbReference type="PANTHER" id="PTHR43736">
    <property type="entry name" value="ADP-RIBOSE PYROPHOSPHATASE"/>
    <property type="match status" value="1"/>
</dbReference>
<dbReference type="PANTHER" id="PTHR43736:SF1">
    <property type="entry name" value="DIHYDRONEOPTERIN TRIPHOSPHATE DIPHOSPHATASE"/>
    <property type="match status" value="1"/>
</dbReference>
<dbReference type="Pfam" id="PF00293">
    <property type="entry name" value="NUDIX"/>
    <property type="match status" value="1"/>
</dbReference>
<dbReference type="PRINTS" id="PR00502">
    <property type="entry name" value="NUDIXFAMILY"/>
</dbReference>
<dbReference type="SUPFAM" id="SSF55811">
    <property type="entry name" value="Nudix"/>
    <property type="match status" value="1"/>
</dbReference>
<dbReference type="PROSITE" id="PS51462">
    <property type="entry name" value="NUDIX"/>
    <property type="match status" value="1"/>
</dbReference>
<dbReference type="PROSITE" id="PS00893">
    <property type="entry name" value="NUDIX_BOX"/>
    <property type="match status" value="1"/>
</dbReference>
<feature type="chain" id="PRO_1000021933" description="RNA pyrophosphohydrolase">
    <location>
        <begin position="1"/>
        <end position="216"/>
    </location>
</feature>
<feature type="domain" description="Nudix hydrolase" evidence="1">
    <location>
        <begin position="6"/>
        <end position="149"/>
    </location>
</feature>
<feature type="short sequence motif" description="Nudix box">
    <location>
        <begin position="38"/>
        <end position="59"/>
    </location>
</feature>
<accession>Q0BIH5</accession>
<sequence length="216" mass="25545">MLDREGFRPNVGIILLNARNEVFWGKRLREHSWQFPQGGIKYGETPMQAMYRELHEETGLHPEHVKIIGRTRDWLRYEVPDKFIKREVRGHYRGQKQIWFLLRMVGRDCDICLRATDHPEFDAWRWNEYWVPLDAVIEFKRDVYQLALTELSRFLRRPAQRADKPQGPRPSSRYPRVIGTQSQQTLTIVDTSVVCSEIEVEASTLDEMPPRVIVGK</sequence>
<organism>
    <name type="scientific">Burkholderia ambifaria (strain ATCC BAA-244 / DSM 16087 / CCUG 44356 / LMG 19182 / AMMD)</name>
    <name type="common">Burkholderia cepacia (strain AMMD)</name>
    <dbReference type="NCBI Taxonomy" id="339670"/>
    <lineage>
        <taxon>Bacteria</taxon>
        <taxon>Pseudomonadati</taxon>
        <taxon>Pseudomonadota</taxon>
        <taxon>Betaproteobacteria</taxon>
        <taxon>Burkholderiales</taxon>
        <taxon>Burkholderiaceae</taxon>
        <taxon>Burkholderia</taxon>
        <taxon>Burkholderia cepacia complex</taxon>
    </lineage>
</organism>
<comment type="function">
    <text evidence="1">Accelerates the degradation of transcripts by removing pyrophosphate from the 5'-end of triphosphorylated RNA, leading to a more labile monophosphorylated state that can stimulate subsequent ribonuclease cleavage.</text>
</comment>
<comment type="cofactor">
    <cofactor evidence="1">
        <name>a divalent metal cation</name>
        <dbReference type="ChEBI" id="CHEBI:60240"/>
    </cofactor>
</comment>
<comment type="similarity">
    <text evidence="1">Belongs to the Nudix hydrolase family. RppH subfamily.</text>
</comment>
<gene>
    <name evidence="1" type="primary">rppH</name>
    <name evidence="1" type="synonym">nudH</name>
    <name type="ordered locus">Bamb_0489</name>
</gene>
<name>RPPH_BURCM</name>
<keyword id="KW-0378">Hydrolase</keyword>